<keyword id="KW-0119">Carbohydrate metabolism</keyword>
<keyword id="KW-0326">Glycosidase</keyword>
<keyword id="KW-0378">Hydrolase</keyword>
<keyword id="KW-0624">Polysaccharide degradation</keyword>
<keyword id="KW-1185">Reference proteome</keyword>
<keyword id="KW-0677">Repeat</keyword>
<keyword id="KW-0964">Secreted</keyword>
<keyword id="KW-0732">Signal</keyword>
<comment type="function">
    <text evidence="1">Chitosanase catalyzing the endo-type cleavage of chitosan, the deacylated form of chitin. Chitosanase may be crucial in the degradation of the deacetylated portion of chitin in the fungal cell wall. Chitoolisaccharides produced by the hydrolysis of partially N-acetylated chitosan are known to have many biological activities, including antibacterial activity, immune-enhancing effects, and elicitor activity (By similarity).</text>
</comment>
<comment type="catalytic activity">
    <reaction>
        <text>Endohydrolysis of beta-(1-&gt;4)-linkages between D-glucosamine residues in a partly acetylated chitosan.</text>
        <dbReference type="EC" id="3.2.1.132"/>
    </reaction>
</comment>
<comment type="subcellular location">
    <subcellularLocation>
        <location evidence="1">Secreted</location>
    </subcellularLocation>
</comment>
<comment type="domain">
    <text evidence="1">The C-terminal R3 domain contains 3 tandem repeats required for the binding to insoluble chitosan.</text>
</comment>
<comment type="similarity">
    <text evidence="3">Belongs to the glycosyl hydrolase 75 family.</text>
</comment>
<reference key="1">
    <citation type="journal article" date="2005" name="Nature">
        <title>Genome sequencing and analysis of Aspergillus oryzae.</title>
        <authorList>
            <person name="Machida M."/>
            <person name="Asai K."/>
            <person name="Sano M."/>
            <person name="Tanaka T."/>
            <person name="Kumagai T."/>
            <person name="Terai G."/>
            <person name="Kusumoto K."/>
            <person name="Arima T."/>
            <person name="Akita O."/>
            <person name="Kashiwagi Y."/>
            <person name="Abe K."/>
            <person name="Gomi K."/>
            <person name="Horiuchi H."/>
            <person name="Kitamoto K."/>
            <person name="Kobayashi T."/>
            <person name="Takeuchi M."/>
            <person name="Denning D.W."/>
            <person name="Galagan J.E."/>
            <person name="Nierman W.C."/>
            <person name="Yu J."/>
            <person name="Archer D.B."/>
            <person name="Bennett J.W."/>
            <person name="Bhatnagar D."/>
            <person name="Cleveland T.E."/>
            <person name="Fedorova N.D."/>
            <person name="Gotoh O."/>
            <person name="Horikawa H."/>
            <person name="Hosoyama A."/>
            <person name="Ichinomiya M."/>
            <person name="Igarashi R."/>
            <person name="Iwashita K."/>
            <person name="Juvvadi P.R."/>
            <person name="Kato M."/>
            <person name="Kato Y."/>
            <person name="Kin T."/>
            <person name="Kokubun A."/>
            <person name="Maeda H."/>
            <person name="Maeyama N."/>
            <person name="Maruyama J."/>
            <person name="Nagasaki H."/>
            <person name="Nakajima T."/>
            <person name="Oda K."/>
            <person name="Okada K."/>
            <person name="Paulsen I."/>
            <person name="Sakamoto K."/>
            <person name="Sawano T."/>
            <person name="Takahashi M."/>
            <person name="Takase K."/>
            <person name="Terabayashi Y."/>
            <person name="Wortman J.R."/>
            <person name="Yamada O."/>
            <person name="Yamagata Y."/>
            <person name="Anazawa H."/>
            <person name="Hata Y."/>
            <person name="Koide Y."/>
            <person name="Komori T."/>
            <person name="Koyama Y."/>
            <person name="Minetoki T."/>
            <person name="Suharnan S."/>
            <person name="Tanaka A."/>
            <person name="Isono K."/>
            <person name="Kuhara S."/>
            <person name="Ogasawara N."/>
            <person name="Kikuchi H."/>
        </authorList>
    </citation>
    <scope>NUCLEOTIDE SEQUENCE [LARGE SCALE GENOMIC DNA]</scope>
    <source>
        <strain>ATCC 42149 / RIB 40</strain>
    </source>
</reference>
<dbReference type="EC" id="3.2.1.132"/>
<dbReference type="EMBL" id="BA000053">
    <property type="protein sequence ID" value="BAE63124.1"/>
    <property type="molecule type" value="Genomic_DNA"/>
</dbReference>
<dbReference type="SMR" id="Q2U5P1"/>
<dbReference type="STRING" id="510516.Q2U5P1"/>
<dbReference type="CAZy" id="GH75">
    <property type="family name" value="Glycoside Hydrolase Family 75"/>
</dbReference>
<dbReference type="EnsemblFungi" id="BAE63124">
    <property type="protein sequence ID" value="BAE63124"/>
    <property type="gene ID" value="AO090113000063"/>
</dbReference>
<dbReference type="HOGENOM" id="CLU_041930_0_0_1"/>
<dbReference type="Proteomes" id="UP000006564">
    <property type="component" value="Chromosome 5"/>
</dbReference>
<dbReference type="GO" id="GO:0005576">
    <property type="term" value="C:extracellular region"/>
    <property type="evidence" value="ECO:0007669"/>
    <property type="project" value="UniProtKB-SubCell"/>
</dbReference>
<dbReference type="GO" id="GO:0016977">
    <property type="term" value="F:chitosanase activity"/>
    <property type="evidence" value="ECO:0007669"/>
    <property type="project" value="UniProtKB-EC"/>
</dbReference>
<dbReference type="GO" id="GO:0000272">
    <property type="term" value="P:polysaccharide catabolic process"/>
    <property type="evidence" value="ECO:0007669"/>
    <property type="project" value="UniProtKB-KW"/>
</dbReference>
<dbReference type="InterPro" id="IPR009939">
    <property type="entry name" value="Chitosanase_fungal"/>
</dbReference>
<dbReference type="PANTHER" id="PTHR42061">
    <property type="entry name" value="ENDO-CHITOSANASE"/>
    <property type="match status" value="1"/>
</dbReference>
<dbReference type="PANTHER" id="PTHR42061:SF4">
    <property type="entry name" value="ENDO-CHITOSANASE"/>
    <property type="match status" value="1"/>
</dbReference>
<dbReference type="Pfam" id="PF07335">
    <property type="entry name" value="Glyco_hydro_75"/>
    <property type="match status" value="1"/>
</dbReference>
<accession>Q2U5P1</accession>
<protein>
    <recommendedName>
        <fullName>Endo-chitosanase C</fullName>
        <ecNumber>3.2.1.132</ecNumber>
    </recommendedName>
</protein>
<feature type="signal peptide" evidence="2">
    <location>
        <begin position="1"/>
        <end position="22"/>
    </location>
</feature>
<feature type="chain" id="PRO_0000429640" description="Endo-chitosanase C">
    <location>
        <begin position="23"/>
        <end position="389"/>
    </location>
</feature>
<feature type="repeat" description="R3-1">
    <location>
        <begin position="280"/>
        <end position="313"/>
    </location>
</feature>
<feature type="repeat" description="R3-2">
    <location>
        <begin position="320"/>
        <end position="350"/>
    </location>
</feature>
<feature type="repeat" description="R3-3">
    <location>
        <begin position="357"/>
        <end position="387"/>
    </location>
</feature>
<name>CSNC_ASPOR</name>
<proteinExistence type="inferred from homology"/>
<sequence>MPIKSFASRLALSLAICGTAMGQKVNGADYNKPDGGPPAKFFQASSSIPVAAIQAAAAKASKVPSHATYPIGQGSTKSTIHSDWAGFSEGAAFSFIADMDVDCDGLNHGCKGNPDGQKETNWGALSAYEVPFIVIPQEFLDANKGTLKGNAVAAVICATSSNGKMFYGIFGDSNGDSPQVTGEASWLMARTCFPEEDLNGNKGHTAADVTYIVFTGDKAVLPSSALNKNYITNFDTLRSMGDSLVGALAKNLNLGGGGGNPPTTLTTTSIPEPTGGSGSCSWPGHCAGFKNKGATCSSNDDCSDDLACQNGKCASDGSAETCSWEGHCKGATCSSNDDCSDELACISGICSVDNGVETCEWEGHCEGASCSSHDDCDGNLACKNGKCSA</sequence>
<gene>
    <name type="primary">csnC</name>
    <name type="ORF">AO090113000063</name>
</gene>
<organism>
    <name type="scientific">Aspergillus oryzae (strain ATCC 42149 / RIB 40)</name>
    <name type="common">Yellow koji mold</name>
    <dbReference type="NCBI Taxonomy" id="510516"/>
    <lineage>
        <taxon>Eukaryota</taxon>
        <taxon>Fungi</taxon>
        <taxon>Dikarya</taxon>
        <taxon>Ascomycota</taxon>
        <taxon>Pezizomycotina</taxon>
        <taxon>Eurotiomycetes</taxon>
        <taxon>Eurotiomycetidae</taxon>
        <taxon>Eurotiales</taxon>
        <taxon>Aspergillaceae</taxon>
        <taxon>Aspergillus</taxon>
        <taxon>Aspergillus subgen. Circumdati</taxon>
    </lineage>
</organism>
<evidence type="ECO:0000250" key="1"/>
<evidence type="ECO:0000255" key="2"/>
<evidence type="ECO:0000305" key="3"/>